<sequence length="124" mass="14557">MDEYSPKRHDIAQLKFLCETLYHDCLANLEESNHGWVNDPTSAINLQLNELIEHIATFALNYKIKYNEDNKLIEQIDEYLDDTFMLFSSYGINMQDLQKWRKSGNRLFRCFVNATKENPASLSC</sequence>
<dbReference type="EMBL" id="AE005174">
    <property type="protein sequence ID" value="AAG54810.1"/>
    <property type="molecule type" value="Genomic_DNA"/>
</dbReference>
<dbReference type="EMBL" id="BA000007">
    <property type="protein sequence ID" value="BAB33937.1"/>
    <property type="molecule type" value="Genomic_DNA"/>
</dbReference>
<dbReference type="PIR" id="B90693">
    <property type="entry name" value="B90693"/>
</dbReference>
<dbReference type="PIR" id="F85543">
    <property type="entry name" value="F85543"/>
</dbReference>
<dbReference type="RefSeq" id="NP_308541.1">
    <property type="nucleotide sequence ID" value="NC_002695.1"/>
</dbReference>
<dbReference type="RefSeq" id="WP_000344800.1">
    <property type="nucleotide sequence ID" value="NZ_VOAI01000005.1"/>
</dbReference>
<dbReference type="SMR" id="P0AAR2"/>
<dbReference type="STRING" id="155864.Z0574"/>
<dbReference type="GeneID" id="914618"/>
<dbReference type="GeneID" id="93776989"/>
<dbReference type="KEGG" id="ece:Z0574"/>
<dbReference type="KEGG" id="ecs:ECs_0514"/>
<dbReference type="PATRIC" id="fig|386585.9.peg.619"/>
<dbReference type="eggNOG" id="ENOG502ZC6G">
    <property type="taxonomic scope" value="Bacteria"/>
</dbReference>
<dbReference type="HOGENOM" id="CLU_164850_0_0_6"/>
<dbReference type="OMA" id="CERVEKY"/>
<dbReference type="Proteomes" id="UP000000558">
    <property type="component" value="Chromosome"/>
</dbReference>
<dbReference type="Proteomes" id="UP000002519">
    <property type="component" value="Chromosome"/>
</dbReference>
<dbReference type="GO" id="GO:0005737">
    <property type="term" value="C:cytoplasm"/>
    <property type="evidence" value="ECO:0007669"/>
    <property type="project" value="UniProtKB-SubCell"/>
</dbReference>
<dbReference type="GO" id="GO:0003677">
    <property type="term" value="F:DNA binding"/>
    <property type="evidence" value="ECO:0007669"/>
    <property type="project" value="UniProtKB-KW"/>
</dbReference>
<dbReference type="InterPro" id="IPR019693">
    <property type="entry name" value="Biofilm_formation_reg_YbaJ"/>
</dbReference>
<dbReference type="NCBIfam" id="NF007948">
    <property type="entry name" value="PRK10667.1"/>
    <property type="match status" value="1"/>
</dbReference>
<dbReference type="Pfam" id="PF10757">
    <property type="entry name" value="YbaJ"/>
    <property type="match status" value="1"/>
</dbReference>
<gene>
    <name type="primary">tomB</name>
    <name type="ordered locus">Z0574</name>
    <name type="ordered locus">ECs0514</name>
</gene>
<evidence type="ECO:0000250" key="1"/>
<evidence type="ECO:0000305" key="2"/>
<accession>P0AAR2</accession>
<accession>P37611</accession>
<accession>P75708</accession>
<feature type="chain" id="PRO_0000168618" description="Hha toxicity modulator TomB">
    <location>
        <begin position="1"/>
        <end position="124"/>
    </location>
</feature>
<protein>
    <recommendedName>
        <fullName>Hha toxicity modulator TomB</fullName>
    </recommendedName>
</protein>
<name>TOMB_ECO57</name>
<keyword id="KW-0963">Cytoplasm</keyword>
<keyword id="KW-0238">DNA-binding</keyword>
<keyword id="KW-1185">Reference proteome</keyword>
<proteinExistence type="inferred from homology"/>
<reference key="1">
    <citation type="journal article" date="2001" name="Nature">
        <title>Genome sequence of enterohaemorrhagic Escherichia coli O157:H7.</title>
        <authorList>
            <person name="Perna N.T."/>
            <person name="Plunkett G. III"/>
            <person name="Burland V."/>
            <person name="Mau B."/>
            <person name="Glasner J.D."/>
            <person name="Rose D.J."/>
            <person name="Mayhew G.F."/>
            <person name="Evans P.S."/>
            <person name="Gregor J."/>
            <person name="Kirkpatrick H.A."/>
            <person name="Posfai G."/>
            <person name="Hackett J."/>
            <person name="Klink S."/>
            <person name="Boutin A."/>
            <person name="Shao Y."/>
            <person name="Miller L."/>
            <person name="Grotbeck E.J."/>
            <person name="Davis N.W."/>
            <person name="Lim A."/>
            <person name="Dimalanta E.T."/>
            <person name="Potamousis K."/>
            <person name="Apodaca J."/>
            <person name="Anantharaman T.S."/>
            <person name="Lin J."/>
            <person name="Yen G."/>
            <person name="Schwartz D.C."/>
            <person name="Welch R.A."/>
            <person name="Blattner F.R."/>
        </authorList>
    </citation>
    <scope>NUCLEOTIDE SEQUENCE [LARGE SCALE GENOMIC DNA]</scope>
    <source>
        <strain>O157:H7 / EDL933 / ATCC 700927 / EHEC</strain>
    </source>
</reference>
<reference key="2">
    <citation type="journal article" date="2001" name="DNA Res.">
        <title>Complete genome sequence of enterohemorrhagic Escherichia coli O157:H7 and genomic comparison with a laboratory strain K-12.</title>
        <authorList>
            <person name="Hayashi T."/>
            <person name="Makino K."/>
            <person name="Ohnishi M."/>
            <person name="Kurokawa K."/>
            <person name="Ishii K."/>
            <person name="Yokoyama K."/>
            <person name="Han C.-G."/>
            <person name="Ohtsubo E."/>
            <person name="Nakayama K."/>
            <person name="Murata T."/>
            <person name="Tanaka M."/>
            <person name="Tobe T."/>
            <person name="Iida T."/>
            <person name="Takami H."/>
            <person name="Honda T."/>
            <person name="Sasakawa C."/>
            <person name="Ogasawara N."/>
            <person name="Yasunaga T."/>
            <person name="Kuhara S."/>
            <person name="Shiba T."/>
            <person name="Hattori M."/>
            <person name="Shinagawa H."/>
        </authorList>
    </citation>
    <scope>NUCLEOTIDE SEQUENCE [LARGE SCALE GENOMIC DNA]</scope>
    <source>
        <strain>O157:H7 / Sakai / RIMD 0509952 / EHEC</strain>
    </source>
</reference>
<organism>
    <name type="scientific">Escherichia coli O157:H7</name>
    <dbReference type="NCBI Taxonomy" id="83334"/>
    <lineage>
        <taxon>Bacteria</taxon>
        <taxon>Pseudomonadati</taxon>
        <taxon>Pseudomonadota</taxon>
        <taxon>Gammaproteobacteria</taxon>
        <taxon>Enterobacterales</taxon>
        <taxon>Enterobacteriaceae</taxon>
        <taxon>Escherichia</taxon>
    </lineage>
</organism>
<comment type="function">
    <text evidence="1">Attenuates Hha toxicity and regulates biofilm formation. Binds to various coding and intergenic regions of genomic DNA (By similarity).</text>
</comment>
<comment type="subcellular location">
    <subcellularLocation>
        <location evidence="1">Cytoplasm</location>
    </subcellularLocation>
</comment>
<comment type="similarity">
    <text evidence="2">Belongs to the TomB family.</text>
</comment>